<comment type="function">
    <text evidence="1">The enzymes which catalyze the reversible phosphorolysis of pyrimidine nucleosides are involved in the degradation of these compounds and in their utilization as carbon and energy sources, or in the rescue of pyrimidine bases for nucleotide synthesis.</text>
</comment>
<comment type="catalytic activity">
    <reaction evidence="1">
        <text>thymidine + phosphate = 2-deoxy-alpha-D-ribose 1-phosphate + thymine</text>
        <dbReference type="Rhea" id="RHEA:16037"/>
        <dbReference type="ChEBI" id="CHEBI:17748"/>
        <dbReference type="ChEBI" id="CHEBI:17821"/>
        <dbReference type="ChEBI" id="CHEBI:43474"/>
        <dbReference type="ChEBI" id="CHEBI:57259"/>
        <dbReference type="EC" id="2.4.2.4"/>
    </reaction>
</comment>
<comment type="pathway">
    <text evidence="1">Pyrimidine metabolism; dTMP biosynthesis via salvage pathway; dTMP from thymine: step 1/2.</text>
</comment>
<comment type="subunit">
    <text evidence="1">Homodimer.</text>
</comment>
<comment type="similarity">
    <text evidence="1">Belongs to the thymidine/pyrimidine-nucleoside phosphorylase family.</text>
</comment>
<organism>
    <name type="scientific">Shigella flexneri</name>
    <dbReference type="NCBI Taxonomy" id="623"/>
    <lineage>
        <taxon>Bacteria</taxon>
        <taxon>Pseudomonadati</taxon>
        <taxon>Pseudomonadota</taxon>
        <taxon>Gammaproteobacteria</taxon>
        <taxon>Enterobacterales</taxon>
        <taxon>Enterobacteriaceae</taxon>
        <taxon>Shigella</taxon>
    </lineage>
</organism>
<sequence>MFLAQEIIRKKRDGHALSDEEIRFFINGIRDNTISEGQIAALAMTIFFHDMTMPERVSLTMAMRDSGTVLDWKSLHLNGPIVDKHSTGGVGDVTSLMLGPMVAACGGYIPMISGRGLGHTGGTLDKLESIPGFDIFPDDNRFREIIKDVGVAIIGQTSSLAPADKRFYATRDITATVDSIPLITASILAKKLAEGLDALVMDVKVGSGAFMPTYELSEALAEAIVGVANGAGVRTTALLTDMNQVLASSAGNAVEVREAVQFLTGEYRNPRLFDVTMALCVEMLISGKLAKDDAEARAKLQAVLDNGKAAEVFGRMVAAQKGPTDFVENYAKYLPTAMLTKAVYADTEGFVSEMDTRALGMAVVAMGGGRRQASDTIDYSVGFTDMARLGDQVDGQRPLAVILAKDENSWQEAAKAVKAAIKLADNAPESTPTVYRRISE</sequence>
<dbReference type="EC" id="2.4.2.4" evidence="1"/>
<dbReference type="EMBL" id="AE005674">
    <property type="protein sequence ID" value="AAN45829.2"/>
    <property type="molecule type" value="Genomic_DNA"/>
</dbReference>
<dbReference type="EMBL" id="AE014073">
    <property type="protein sequence ID" value="AAP19603.1"/>
    <property type="molecule type" value="Genomic_DNA"/>
</dbReference>
<dbReference type="RefSeq" id="NP_710122.2">
    <property type="nucleotide sequence ID" value="NC_004337.2"/>
</dbReference>
<dbReference type="RefSeq" id="WP_000477815.1">
    <property type="nucleotide sequence ID" value="NZ_WPGW01000013.1"/>
</dbReference>
<dbReference type="SMR" id="Q83P01"/>
<dbReference type="STRING" id="198214.SF4414"/>
<dbReference type="PaxDb" id="198214-SF4414"/>
<dbReference type="GeneID" id="1025453"/>
<dbReference type="KEGG" id="sfl:SF4414"/>
<dbReference type="KEGG" id="sfx:S4685"/>
<dbReference type="PATRIC" id="fig|198214.7.peg.5202"/>
<dbReference type="HOGENOM" id="CLU_025040_0_1_6"/>
<dbReference type="UniPathway" id="UPA00578">
    <property type="reaction ID" value="UER00638"/>
</dbReference>
<dbReference type="Proteomes" id="UP000001006">
    <property type="component" value="Chromosome"/>
</dbReference>
<dbReference type="Proteomes" id="UP000002673">
    <property type="component" value="Chromosome"/>
</dbReference>
<dbReference type="GO" id="GO:0005829">
    <property type="term" value="C:cytosol"/>
    <property type="evidence" value="ECO:0007669"/>
    <property type="project" value="TreeGrafter"/>
</dbReference>
<dbReference type="GO" id="GO:0004645">
    <property type="term" value="F:1,4-alpha-oligoglucan phosphorylase activity"/>
    <property type="evidence" value="ECO:0007669"/>
    <property type="project" value="InterPro"/>
</dbReference>
<dbReference type="GO" id="GO:0009032">
    <property type="term" value="F:thymidine phosphorylase activity"/>
    <property type="evidence" value="ECO:0007669"/>
    <property type="project" value="UniProtKB-UniRule"/>
</dbReference>
<dbReference type="GO" id="GO:0006206">
    <property type="term" value="P:pyrimidine nucleobase metabolic process"/>
    <property type="evidence" value="ECO:0007669"/>
    <property type="project" value="InterPro"/>
</dbReference>
<dbReference type="GO" id="GO:0046104">
    <property type="term" value="P:thymidine metabolic process"/>
    <property type="evidence" value="ECO:0007669"/>
    <property type="project" value="UniProtKB-UniRule"/>
</dbReference>
<dbReference type="FunFam" id="3.40.1030.10:FF:000001">
    <property type="entry name" value="Thymidine phosphorylase"/>
    <property type="match status" value="1"/>
</dbReference>
<dbReference type="FunFam" id="3.90.1170.30:FF:000001">
    <property type="entry name" value="Thymidine phosphorylase"/>
    <property type="match status" value="1"/>
</dbReference>
<dbReference type="Gene3D" id="3.40.1030.10">
    <property type="entry name" value="Nucleoside phosphorylase/phosphoribosyltransferase catalytic domain"/>
    <property type="match status" value="1"/>
</dbReference>
<dbReference type="Gene3D" id="3.90.1170.30">
    <property type="entry name" value="Pyrimidine nucleoside phosphorylase-like, C-terminal domain"/>
    <property type="match status" value="1"/>
</dbReference>
<dbReference type="Gene3D" id="1.20.970.10">
    <property type="entry name" value="Transferase, Pyrimidine Nucleoside Phosphorylase, Chain C"/>
    <property type="match status" value="1"/>
</dbReference>
<dbReference type="HAMAP" id="MF_01628">
    <property type="entry name" value="Thymid_phosp"/>
    <property type="match status" value="1"/>
</dbReference>
<dbReference type="InterPro" id="IPR000312">
    <property type="entry name" value="Glycosyl_Trfase_fam3"/>
</dbReference>
<dbReference type="InterPro" id="IPR017459">
    <property type="entry name" value="Glycosyl_Trfase_fam3_N_dom"/>
</dbReference>
<dbReference type="InterPro" id="IPR036320">
    <property type="entry name" value="Glycosyl_Trfase_fam3_N_dom_sf"/>
</dbReference>
<dbReference type="InterPro" id="IPR035902">
    <property type="entry name" value="Nuc_phospho_transferase"/>
</dbReference>
<dbReference type="InterPro" id="IPR036566">
    <property type="entry name" value="PYNP-like_C_sf"/>
</dbReference>
<dbReference type="InterPro" id="IPR013102">
    <property type="entry name" value="PYNP_C"/>
</dbReference>
<dbReference type="InterPro" id="IPR018090">
    <property type="entry name" value="Pyrmidine_PPas_bac/euk"/>
</dbReference>
<dbReference type="InterPro" id="IPR017872">
    <property type="entry name" value="Pyrmidine_PPase_CS"/>
</dbReference>
<dbReference type="InterPro" id="IPR000053">
    <property type="entry name" value="Thymidine/pyrmidine_PPase"/>
</dbReference>
<dbReference type="InterPro" id="IPR013465">
    <property type="entry name" value="Thymidine_Pase"/>
</dbReference>
<dbReference type="NCBIfam" id="NF004490">
    <property type="entry name" value="PRK05820.1"/>
    <property type="match status" value="1"/>
</dbReference>
<dbReference type="NCBIfam" id="TIGR02643">
    <property type="entry name" value="T_phosphoryl"/>
    <property type="match status" value="1"/>
</dbReference>
<dbReference type="NCBIfam" id="TIGR02644">
    <property type="entry name" value="Y_phosphoryl"/>
    <property type="match status" value="1"/>
</dbReference>
<dbReference type="PANTHER" id="PTHR10515">
    <property type="entry name" value="THYMIDINE PHOSPHORYLASE"/>
    <property type="match status" value="1"/>
</dbReference>
<dbReference type="PANTHER" id="PTHR10515:SF0">
    <property type="entry name" value="THYMIDINE PHOSPHORYLASE"/>
    <property type="match status" value="1"/>
</dbReference>
<dbReference type="Pfam" id="PF02885">
    <property type="entry name" value="Glycos_trans_3N"/>
    <property type="match status" value="1"/>
</dbReference>
<dbReference type="Pfam" id="PF00591">
    <property type="entry name" value="Glycos_transf_3"/>
    <property type="match status" value="1"/>
</dbReference>
<dbReference type="Pfam" id="PF07831">
    <property type="entry name" value="PYNP_C"/>
    <property type="match status" value="1"/>
</dbReference>
<dbReference type="PIRSF" id="PIRSF000478">
    <property type="entry name" value="TP_PyNP"/>
    <property type="match status" value="1"/>
</dbReference>
<dbReference type="SMART" id="SM00941">
    <property type="entry name" value="PYNP_C"/>
    <property type="match status" value="1"/>
</dbReference>
<dbReference type="SUPFAM" id="SSF52418">
    <property type="entry name" value="Nucleoside phosphorylase/phosphoribosyltransferase catalytic domain"/>
    <property type="match status" value="1"/>
</dbReference>
<dbReference type="SUPFAM" id="SSF47648">
    <property type="entry name" value="Nucleoside phosphorylase/phosphoribosyltransferase N-terminal domain"/>
    <property type="match status" value="1"/>
</dbReference>
<dbReference type="SUPFAM" id="SSF54680">
    <property type="entry name" value="Pyrimidine nucleoside phosphorylase C-terminal domain"/>
    <property type="match status" value="1"/>
</dbReference>
<dbReference type="PROSITE" id="PS00647">
    <property type="entry name" value="THYMID_PHOSPHORYLASE"/>
    <property type="match status" value="1"/>
</dbReference>
<reference key="1">
    <citation type="journal article" date="2002" name="Nucleic Acids Res.">
        <title>Genome sequence of Shigella flexneri 2a: insights into pathogenicity through comparison with genomes of Escherichia coli K12 and O157.</title>
        <authorList>
            <person name="Jin Q."/>
            <person name="Yuan Z."/>
            <person name="Xu J."/>
            <person name="Wang Y."/>
            <person name="Shen Y."/>
            <person name="Lu W."/>
            <person name="Wang J."/>
            <person name="Liu H."/>
            <person name="Yang J."/>
            <person name="Yang F."/>
            <person name="Zhang X."/>
            <person name="Zhang J."/>
            <person name="Yang G."/>
            <person name="Wu H."/>
            <person name="Qu D."/>
            <person name="Dong J."/>
            <person name="Sun L."/>
            <person name="Xue Y."/>
            <person name="Zhao A."/>
            <person name="Gao Y."/>
            <person name="Zhu J."/>
            <person name="Kan B."/>
            <person name="Ding K."/>
            <person name="Chen S."/>
            <person name="Cheng H."/>
            <person name="Yao Z."/>
            <person name="He B."/>
            <person name="Chen R."/>
            <person name="Ma D."/>
            <person name="Qiang B."/>
            <person name="Wen Y."/>
            <person name="Hou Y."/>
            <person name="Yu J."/>
        </authorList>
    </citation>
    <scope>NUCLEOTIDE SEQUENCE [LARGE SCALE GENOMIC DNA]</scope>
    <source>
        <strain>301 / Serotype 2a</strain>
    </source>
</reference>
<reference key="2">
    <citation type="journal article" date="2003" name="Infect. Immun.">
        <title>Complete genome sequence and comparative genomics of Shigella flexneri serotype 2a strain 2457T.</title>
        <authorList>
            <person name="Wei J."/>
            <person name="Goldberg M.B."/>
            <person name="Burland V."/>
            <person name="Venkatesan M.M."/>
            <person name="Deng W."/>
            <person name="Fournier G."/>
            <person name="Mayhew G.F."/>
            <person name="Plunkett G. III"/>
            <person name="Rose D.J."/>
            <person name="Darling A."/>
            <person name="Mau B."/>
            <person name="Perna N.T."/>
            <person name="Payne S.M."/>
            <person name="Runyen-Janecky L.J."/>
            <person name="Zhou S."/>
            <person name="Schwartz D.C."/>
            <person name="Blattner F.R."/>
        </authorList>
    </citation>
    <scope>NUCLEOTIDE SEQUENCE [LARGE SCALE GENOMIC DNA]</scope>
    <source>
        <strain>ATCC 700930 / 2457T / Serotype 2a</strain>
    </source>
</reference>
<protein>
    <recommendedName>
        <fullName evidence="1">Thymidine phosphorylase</fullName>
        <ecNumber evidence="1">2.4.2.4</ecNumber>
    </recommendedName>
    <alternativeName>
        <fullName evidence="1">TdRPase</fullName>
    </alternativeName>
</protein>
<proteinExistence type="inferred from homology"/>
<accession>Q83P01</accession>
<accession>Q7UAI7</accession>
<name>TYPH_SHIFL</name>
<feature type="chain" id="PRO_0000059068" description="Thymidine phosphorylase">
    <location>
        <begin position="1"/>
        <end position="440"/>
    </location>
</feature>
<gene>
    <name evidence="1" type="primary">deoA</name>
    <name type="ordered locus">SF4414</name>
    <name type="ordered locus">S4685</name>
</gene>
<evidence type="ECO:0000255" key="1">
    <source>
        <dbReference type="HAMAP-Rule" id="MF_01628"/>
    </source>
</evidence>
<keyword id="KW-0328">Glycosyltransferase</keyword>
<keyword id="KW-1185">Reference proteome</keyword>
<keyword id="KW-0808">Transferase</keyword>